<proteinExistence type="inferred from homology"/>
<name>OBG_METFK</name>
<evidence type="ECO:0000255" key="1">
    <source>
        <dbReference type="HAMAP-Rule" id="MF_01454"/>
    </source>
</evidence>
<evidence type="ECO:0000255" key="2">
    <source>
        <dbReference type="PROSITE-ProRule" id="PRU01231"/>
    </source>
</evidence>
<feature type="chain" id="PRO_0000386038" description="GTPase Obg">
    <location>
        <begin position="1"/>
        <end position="353"/>
    </location>
</feature>
<feature type="domain" description="Obg" evidence="2">
    <location>
        <begin position="1"/>
        <end position="159"/>
    </location>
</feature>
<feature type="domain" description="OBG-type G" evidence="1">
    <location>
        <begin position="160"/>
        <end position="332"/>
    </location>
</feature>
<feature type="binding site" evidence="1">
    <location>
        <begin position="166"/>
        <end position="173"/>
    </location>
    <ligand>
        <name>GTP</name>
        <dbReference type="ChEBI" id="CHEBI:37565"/>
    </ligand>
</feature>
<feature type="binding site" evidence="1">
    <location>
        <position position="173"/>
    </location>
    <ligand>
        <name>Mg(2+)</name>
        <dbReference type="ChEBI" id="CHEBI:18420"/>
    </ligand>
</feature>
<feature type="binding site" evidence="1">
    <location>
        <begin position="191"/>
        <end position="195"/>
    </location>
    <ligand>
        <name>GTP</name>
        <dbReference type="ChEBI" id="CHEBI:37565"/>
    </ligand>
</feature>
<feature type="binding site" evidence="1">
    <location>
        <position position="193"/>
    </location>
    <ligand>
        <name>Mg(2+)</name>
        <dbReference type="ChEBI" id="CHEBI:18420"/>
    </ligand>
</feature>
<feature type="binding site" evidence="1">
    <location>
        <begin position="213"/>
        <end position="216"/>
    </location>
    <ligand>
        <name>GTP</name>
        <dbReference type="ChEBI" id="CHEBI:37565"/>
    </ligand>
</feature>
<feature type="binding site" evidence="1">
    <location>
        <begin position="284"/>
        <end position="287"/>
    </location>
    <ligand>
        <name>GTP</name>
        <dbReference type="ChEBI" id="CHEBI:37565"/>
    </ligand>
</feature>
<feature type="binding site" evidence="1">
    <location>
        <begin position="313"/>
        <end position="315"/>
    </location>
    <ligand>
        <name>GTP</name>
        <dbReference type="ChEBI" id="CHEBI:37565"/>
    </ligand>
</feature>
<protein>
    <recommendedName>
        <fullName evidence="1">GTPase Obg</fullName>
        <ecNumber evidence="1">3.6.5.-</ecNumber>
    </recommendedName>
    <alternativeName>
        <fullName evidence="1">GTP-binding protein Obg</fullName>
    </alternativeName>
</protein>
<reference key="1">
    <citation type="submission" date="2006-03" db="EMBL/GenBank/DDBJ databases">
        <title>Complete sequence of Methylobacillus flagellatus KT.</title>
        <authorList>
            <consortium name="US DOE Joint Genome Institute"/>
            <person name="Copeland A."/>
            <person name="Lucas S."/>
            <person name="Lapidus A."/>
            <person name="Barry K."/>
            <person name="Detter J.C."/>
            <person name="Glavina del Rio T."/>
            <person name="Hammon N."/>
            <person name="Israni S."/>
            <person name="Dalin E."/>
            <person name="Tice H."/>
            <person name="Pitluck S."/>
            <person name="Brettin T."/>
            <person name="Bruce D."/>
            <person name="Han C."/>
            <person name="Tapia R."/>
            <person name="Saunders E."/>
            <person name="Gilna P."/>
            <person name="Schmutz J."/>
            <person name="Larimer F."/>
            <person name="Land M."/>
            <person name="Kyrpides N."/>
            <person name="Anderson I."/>
            <person name="Richardson P."/>
        </authorList>
    </citation>
    <scope>NUCLEOTIDE SEQUENCE [LARGE SCALE GENOMIC DNA]</scope>
    <source>
        <strain>ATCC 51484 / DSM 6875 / VKM B-1610 / KT</strain>
    </source>
</reference>
<keyword id="KW-0963">Cytoplasm</keyword>
<keyword id="KW-0342">GTP-binding</keyword>
<keyword id="KW-0378">Hydrolase</keyword>
<keyword id="KW-0460">Magnesium</keyword>
<keyword id="KW-0479">Metal-binding</keyword>
<keyword id="KW-0547">Nucleotide-binding</keyword>
<keyword id="KW-1185">Reference proteome</keyword>
<sequence length="353" mass="38320">MKFIDEATIKVYAGDGGNGVATFRREKYEAMGGPNGGDGGRGGSIYMIADRNINTLVDYRYTRVFRAQRGENGRGSDQYGASGEDMVLRVPVGTVVSDKATGQVLTDLAEHGQKVMVAKGGKGGLGNIHFKSSVNRAPRQCTKGDPGEEFELYLELKVLADVGLLGMPNAGKSTFIRSVSAAKPKVADYPFTTLHPNLGVVRVDANRSFVIADVPGLIEGAAEGAGLGHQFLRHLSRTRLLLHLVDLAPFDESVDPVREALAITEELRKYDEALYNKPRWLVLNKVDMLEDSEQKVAEFVQRLGWQGRYFAISALAGIGCRELTYAIMEHVEEASRVEHEAAENTGAASMSGD</sequence>
<comment type="function">
    <text evidence="1">An essential GTPase which binds GTP, GDP and possibly (p)ppGpp with moderate affinity, with high nucleotide exchange rates and a fairly low GTP hydrolysis rate. Plays a role in control of the cell cycle, stress response, ribosome biogenesis and in those bacteria that undergo differentiation, in morphogenesis control.</text>
</comment>
<comment type="cofactor">
    <cofactor evidence="1">
        <name>Mg(2+)</name>
        <dbReference type="ChEBI" id="CHEBI:18420"/>
    </cofactor>
</comment>
<comment type="subunit">
    <text evidence="1">Monomer.</text>
</comment>
<comment type="subcellular location">
    <subcellularLocation>
        <location evidence="1">Cytoplasm</location>
    </subcellularLocation>
</comment>
<comment type="similarity">
    <text evidence="1">Belongs to the TRAFAC class OBG-HflX-like GTPase superfamily. OBG GTPase family.</text>
</comment>
<accession>Q1GZ53</accession>
<dbReference type="EC" id="3.6.5.-" evidence="1"/>
<dbReference type="EMBL" id="CP000284">
    <property type="protein sequence ID" value="ABE50484.1"/>
    <property type="molecule type" value="Genomic_DNA"/>
</dbReference>
<dbReference type="RefSeq" id="WP_011480438.1">
    <property type="nucleotide sequence ID" value="NC_007947.1"/>
</dbReference>
<dbReference type="SMR" id="Q1GZ53"/>
<dbReference type="STRING" id="265072.Mfla_2217"/>
<dbReference type="KEGG" id="mfa:Mfla_2217"/>
<dbReference type="eggNOG" id="COG0536">
    <property type="taxonomic scope" value="Bacteria"/>
</dbReference>
<dbReference type="HOGENOM" id="CLU_011747_2_0_4"/>
<dbReference type="OrthoDB" id="9807318at2"/>
<dbReference type="Proteomes" id="UP000002440">
    <property type="component" value="Chromosome"/>
</dbReference>
<dbReference type="GO" id="GO:0005737">
    <property type="term" value="C:cytoplasm"/>
    <property type="evidence" value="ECO:0007669"/>
    <property type="project" value="UniProtKB-SubCell"/>
</dbReference>
<dbReference type="GO" id="GO:0005525">
    <property type="term" value="F:GTP binding"/>
    <property type="evidence" value="ECO:0007669"/>
    <property type="project" value="UniProtKB-UniRule"/>
</dbReference>
<dbReference type="GO" id="GO:0003924">
    <property type="term" value="F:GTPase activity"/>
    <property type="evidence" value="ECO:0007669"/>
    <property type="project" value="UniProtKB-UniRule"/>
</dbReference>
<dbReference type="GO" id="GO:0000287">
    <property type="term" value="F:magnesium ion binding"/>
    <property type="evidence" value="ECO:0007669"/>
    <property type="project" value="InterPro"/>
</dbReference>
<dbReference type="GO" id="GO:0042254">
    <property type="term" value="P:ribosome biogenesis"/>
    <property type="evidence" value="ECO:0007669"/>
    <property type="project" value="UniProtKB-UniRule"/>
</dbReference>
<dbReference type="CDD" id="cd01898">
    <property type="entry name" value="Obg"/>
    <property type="match status" value="1"/>
</dbReference>
<dbReference type="FunFam" id="2.70.210.12:FF:000001">
    <property type="entry name" value="GTPase Obg"/>
    <property type="match status" value="1"/>
</dbReference>
<dbReference type="Gene3D" id="2.70.210.12">
    <property type="entry name" value="GTP1/OBG domain"/>
    <property type="match status" value="1"/>
</dbReference>
<dbReference type="Gene3D" id="3.40.50.300">
    <property type="entry name" value="P-loop containing nucleotide triphosphate hydrolases"/>
    <property type="match status" value="1"/>
</dbReference>
<dbReference type="HAMAP" id="MF_01454">
    <property type="entry name" value="GTPase_Obg"/>
    <property type="match status" value="1"/>
</dbReference>
<dbReference type="InterPro" id="IPR031167">
    <property type="entry name" value="G_OBG"/>
</dbReference>
<dbReference type="InterPro" id="IPR006073">
    <property type="entry name" value="GTP-bd"/>
</dbReference>
<dbReference type="InterPro" id="IPR014100">
    <property type="entry name" value="GTP-bd_Obg/CgtA"/>
</dbReference>
<dbReference type="InterPro" id="IPR006074">
    <property type="entry name" value="GTP1-OBG_CS"/>
</dbReference>
<dbReference type="InterPro" id="IPR006169">
    <property type="entry name" value="GTP1_OBG_dom"/>
</dbReference>
<dbReference type="InterPro" id="IPR036726">
    <property type="entry name" value="GTP1_OBG_dom_sf"/>
</dbReference>
<dbReference type="InterPro" id="IPR045086">
    <property type="entry name" value="OBG_GTPase"/>
</dbReference>
<dbReference type="InterPro" id="IPR027417">
    <property type="entry name" value="P-loop_NTPase"/>
</dbReference>
<dbReference type="InterPro" id="IPR005225">
    <property type="entry name" value="Small_GTP-bd"/>
</dbReference>
<dbReference type="NCBIfam" id="TIGR02729">
    <property type="entry name" value="Obg_CgtA"/>
    <property type="match status" value="1"/>
</dbReference>
<dbReference type="NCBIfam" id="NF008954">
    <property type="entry name" value="PRK12296.1"/>
    <property type="match status" value="1"/>
</dbReference>
<dbReference type="NCBIfam" id="NF008955">
    <property type="entry name" value="PRK12297.1"/>
    <property type="match status" value="1"/>
</dbReference>
<dbReference type="NCBIfam" id="NF008956">
    <property type="entry name" value="PRK12299.1"/>
    <property type="match status" value="1"/>
</dbReference>
<dbReference type="NCBIfam" id="TIGR00231">
    <property type="entry name" value="small_GTP"/>
    <property type="match status" value="1"/>
</dbReference>
<dbReference type="PANTHER" id="PTHR11702">
    <property type="entry name" value="DEVELOPMENTALLY REGULATED GTP-BINDING PROTEIN-RELATED"/>
    <property type="match status" value="1"/>
</dbReference>
<dbReference type="PANTHER" id="PTHR11702:SF31">
    <property type="entry name" value="MITOCHONDRIAL RIBOSOME-ASSOCIATED GTPASE 2"/>
    <property type="match status" value="1"/>
</dbReference>
<dbReference type="Pfam" id="PF01018">
    <property type="entry name" value="GTP1_OBG"/>
    <property type="match status" value="1"/>
</dbReference>
<dbReference type="Pfam" id="PF01926">
    <property type="entry name" value="MMR_HSR1"/>
    <property type="match status" value="1"/>
</dbReference>
<dbReference type="PIRSF" id="PIRSF002401">
    <property type="entry name" value="GTP_bd_Obg/CgtA"/>
    <property type="match status" value="1"/>
</dbReference>
<dbReference type="PRINTS" id="PR00326">
    <property type="entry name" value="GTP1OBG"/>
</dbReference>
<dbReference type="SUPFAM" id="SSF82051">
    <property type="entry name" value="Obg GTP-binding protein N-terminal domain"/>
    <property type="match status" value="1"/>
</dbReference>
<dbReference type="SUPFAM" id="SSF52540">
    <property type="entry name" value="P-loop containing nucleoside triphosphate hydrolases"/>
    <property type="match status" value="1"/>
</dbReference>
<dbReference type="PROSITE" id="PS51710">
    <property type="entry name" value="G_OBG"/>
    <property type="match status" value="1"/>
</dbReference>
<dbReference type="PROSITE" id="PS00905">
    <property type="entry name" value="GTP1_OBG"/>
    <property type="match status" value="1"/>
</dbReference>
<dbReference type="PROSITE" id="PS51883">
    <property type="entry name" value="OBG"/>
    <property type="match status" value="1"/>
</dbReference>
<organism>
    <name type="scientific">Methylobacillus flagellatus (strain ATCC 51484 / DSM 6875 / VKM B-1610 / KT)</name>
    <dbReference type="NCBI Taxonomy" id="265072"/>
    <lineage>
        <taxon>Bacteria</taxon>
        <taxon>Pseudomonadati</taxon>
        <taxon>Pseudomonadota</taxon>
        <taxon>Betaproteobacteria</taxon>
        <taxon>Nitrosomonadales</taxon>
        <taxon>Methylophilaceae</taxon>
        <taxon>Methylobacillus</taxon>
    </lineage>
</organism>
<gene>
    <name evidence="1" type="primary">obg</name>
    <name type="ordered locus">Mfla_2217</name>
</gene>